<protein>
    <recommendedName>
        <fullName evidence="5">Kappa-actitoxin-Avd4i</fullName>
        <shortName evidence="5">Kappa-AITX-Avd4i</shortName>
    </recommendedName>
    <alternativeName>
        <fullName>Antihypertensive protein BDS-11</fullName>
    </alternativeName>
    <alternativeName>
        <fullName>Antihypertensive protein BDS-9</fullName>
    </alternativeName>
    <alternativeName>
        <fullName evidence="4">Blood depressing substance 11</fullName>
        <shortName evidence="4">BDS-11</shortName>
    </alternativeName>
    <alternativeName>
        <fullName evidence="4">Blood depressing substance 9</fullName>
        <shortName evidence="4">BDS-9</shortName>
    </alternativeName>
    <alternativeName>
        <fullName evidence="5">Kappa-actitoxin-Avd4k</fullName>
        <shortName evidence="5">Kappa-AITX-Avd4k</shortName>
    </alternativeName>
</protein>
<evidence type="ECO:0000250" key="1">
    <source>
        <dbReference type="UniProtKB" id="P11494"/>
    </source>
</evidence>
<evidence type="ECO:0000255" key="2"/>
<evidence type="ECO:0000269" key="3">
    <source>
    </source>
</evidence>
<evidence type="ECO:0000303" key="4">
    <source>
    </source>
</evidence>
<evidence type="ECO:0000303" key="5">
    <source>
    </source>
</evidence>
<evidence type="ECO:0000305" key="6"/>
<feature type="signal peptide" evidence="2">
    <location>
        <begin position="1"/>
        <end position="19"/>
    </location>
</feature>
<feature type="propeptide" id="PRO_0000433662" evidence="1">
    <location>
        <begin position="20"/>
        <end position="31"/>
    </location>
</feature>
<feature type="chain" id="PRO_0000433663" description="Kappa-actitoxin-Avd4i">
    <location>
        <begin position="34"/>
        <end position="80"/>
    </location>
</feature>
<feature type="disulfide bond" evidence="1">
    <location>
        <begin position="41"/>
        <end position="76"/>
    </location>
</feature>
<feature type="disulfide bond" evidence="1">
    <location>
        <begin position="43"/>
        <end position="69"/>
    </location>
</feature>
<feature type="disulfide bond" evidence="1">
    <location>
        <begin position="59"/>
        <end position="77"/>
    </location>
</feature>
<sequence length="80" mass="8765">MNKALFLCLVVLCAAVVFAAEDLQKAKHAPFKRGAAGAAPCFCPDKVDRGDLWMFRGDCPGGYGYTSDCYVWPNICCYPH</sequence>
<accession>P0DMY5</accession>
<accession>P0DMY3</accession>
<keyword id="KW-0165">Cleavage on pair of basic residues</keyword>
<keyword id="KW-1015">Disulfide bond</keyword>
<keyword id="KW-0382">Hypotensive agent</keyword>
<keyword id="KW-0872">Ion channel impairing toxin</keyword>
<keyword id="KW-0166">Nematocyst</keyword>
<keyword id="KW-0528">Neurotoxin</keyword>
<keyword id="KW-0632">Potassium channel impairing toxin</keyword>
<keyword id="KW-0964">Secreted</keyword>
<keyword id="KW-0732">Signal</keyword>
<keyword id="KW-0800">Toxin</keyword>
<keyword id="KW-1220">Voltage-gated potassium channel impairing toxin</keyword>
<comment type="function">
    <text evidence="1">Blocks Kv3 voltage-gated potassium channels. Reduces blood pressure.</text>
</comment>
<comment type="subcellular location">
    <subcellularLocation>
        <location evidence="6">Secreted</location>
    </subcellularLocation>
    <subcellularLocation>
        <location evidence="6">Nematocyst</location>
    </subcellularLocation>
</comment>
<comment type="tissue specificity">
    <text evidence="3">Weakly expressed in the ectodermal tissue from the distal and proximal tentacles, body wall, and oral disk.</text>
</comment>
<comment type="similarity">
    <text evidence="6">Belongs to the sea anemone type 3 (BDS) potassium channel toxin family.</text>
</comment>
<comment type="caution">
    <text evidence="6">Opinions are divided on whether Anemonia viridis (Forsskal, 1775) and Anemonia sulcata (Pennant, 1777) are separate species.</text>
</comment>
<organism>
    <name type="scientific">Anemonia viridis</name>
    <name type="common">Snakelocks anemone</name>
    <dbReference type="NCBI Taxonomy" id="51769"/>
    <lineage>
        <taxon>Eukaryota</taxon>
        <taxon>Metazoa</taxon>
        <taxon>Cnidaria</taxon>
        <taxon>Anthozoa</taxon>
        <taxon>Hexacorallia</taxon>
        <taxon>Actiniaria</taxon>
        <taxon>Actiniidae</taxon>
        <taxon>Anemonia</taxon>
    </lineage>
</organism>
<proteinExistence type="evidence at transcript level"/>
<name>BDSB_ANEVI</name>
<dbReference type="EMBL" id="FK740326">
    <property type="status" value="NOT_ANNOTATED_CDS"/>
    <property type="molecule type" value="mRNA"/>
</dbReference>
<dbReference type="EMBL" id="FK721972">
    <property type="status" value="NOT_ANNOTATED_CDS"/>
    <property type="molecule type" value="mRNA"/>
</dbReference>
<dbReference type="SMR" id="P0DMY5"/>
<dbReference type="GO" id="GO:0005576">
    <property type="term" value="C:extracellular region"/>
    <property type="evidence" value="ECO:0007669"/>
    <property type="project" value="UniProtKB-SubCell"/>
</dbReference>
<dbReference type="GO" id="GO:0042151">
    <property type="term" value="C:nematocyst"/>
    <property type="evidence" value="ECO:0007669"/>
    <property type="project" value="UniProtKB-SubCell"/>
</dbReference>
<dbReference type="GO" id="GO:0008200">
    <property type="term" value="F:ion channel inhibitor activity"/>
    <property type="evidence" value="ECO:0007669"/>
    <property type="project" value="InterPro"/>
</dbReference>
<dbReference type="GO" id="GO:0015459">
    <property type="term" value="F:potassium channel regulator activity"/>
    <property type="evidence" value="ECO:0007669"/>
    <property type="project" value="UniProtKB-KW"/>
</dbReference>
<dbReference type="GO" id="GO:0090729">
    <property type="term" value="F:toxin activity"/>
    <property type="evidence" value="ECO:0007669"/>
    <property type="project" value="UniProtKB-KW"/>
</dbReference>
<dbReference type="GO" id="GO:0008217">
    <property type="term" value="P:regulation of blood pressure"/>
    <property type="evidence" value="ECO:0007669"/>
    <property type="project" value="UniProtKB-KW"/>
</dbReference>
<dbReference type="Gene3D" id="2.20.20.10">
    <property type="entry name" value="Anthopleurin-A"/>
    <property type="match status" value="1"/>
</dbReference>
<dbReference type="InterPro" id="IPR012414">
    <property type="entry name" value="BDS_K_chnl_tox"/>
</dbReference>
<dbReference type="InterPro" id="IPR023355">
    <property type="entry name" value="Myo_ane_neurotoxin_sf"/>
</dbReference>
<dbReference type="Pfam" id="PF07936">
    <property type="entry name" value="Defensin_4"/>
    <property type="match status" value="1"/>
</dbReference>
<dbReference type="SUPFAM" id="SSF57392">
    <property type="entry name" value="Defensin-like"/>
    <property type="match status" value="1"/>
</dbReference>
<reference key="1">
    <citation type="journal article" date="2009" name="BMC Genomics">
        <title>Comprehensive EST analysis of the symbiotic sea anemone, Anemonia viridis.</title>
        <authorList>
            <person name="Sabourault C."/>
            <person name="Ganot P."/>
            <person name="Deleury E."/>
            <person name="Allemand D."/>
            <person name="Furla P."/>
        </authorList>
    </citation>
    <scope>NUCLEOTIDE SEQUENCE [MRNA]</scope>
</reference>
<reference key="2">
    <citation type="journal article" date="2011" name="BMC Genomics">
        <title>The mining of toxin-like polypeptides from EST database by single residue distribution analysis.</title>
        <authorList>
            <person name="Kozlov S."/>
            <person name="Grishin E."/>
        </authorList>
    </citation>
    <scope>NOMENCLATURE</scope>
</reference>
<reference key="3">
    <citation type="journal article" date="2012" name="Toxicon">
        <title>Development of a rational nomenclature for naming peptide and protein toxins from sea anemones.</title>
        <authorList>
            <person name="Oliveira J.S."/>
            <person name="Fuentes-Silva D."/>
            <person name="King G.F."/>
        </authorList>
    </citation>
    <scope>NOMENCLATURE</scope>
</reference>
<reference key="4">
    <citation type="journal article" date="2013" name="Mar. Drugs">
        <title>Evidence of accelerated evolution and ectodermal-specific expression of presumptive BDS toxin cDNAs from Anemonia viridis.</title>
        <authorList>
            <person name="Nicosia A."/>
            <person name="Maggio T."/>
            <person name="Mazzola S."/>
            <person name="Cuttitta A."/>
        </authorList>
    </citation>
    <scope>3D-STRUCTURE MODELING</scope>
    <scope>TISSUE SPECIFICITY</scope>
</reference>